<organism>
    <name type="scientific">Bos taurus</name>
    <name type="common">Bovine</name>
    <dbReference type="NCBI Taxonomy" id="9913"/>
    <lineage>
        <taxon>Eukaryota</taxon>
        <taxon>Metazoa</taxon>
        <taxon>Chordata</taxon>
        <taxon>Craniata</taxon>
        <taxon>Vertebrata</taxon>
        <taxon>Euteleostomi</taxon>
        <taxon>Mammalia</taxon>
        <taxon>Eutheria</taxon>
        <taxon>Laurasiatheria</taxon>
        <taxon>Artiodactyla</taxon>
        <taxon>Ruminantia</taxon>
        <taxon>Pecora</taxon>
        <taxon>Bovidae</taxon>
        <taxon>Bovinae</taxon>
        <taxon>Bos</taxon>
    </lineage>
</organism>
<sequence length="785" mass="88856">MADLDSPQKLSGVPRPPDGVGGGSCSEISTELIRSLTDLQELEAVYERLCGEEKVVERELDALLEQQNTIESKMVTLHRMGPNLQLIEGDAKQLAGMITFTCNLAENVSSKVRQLDLAKNRLYQAIQRADDILDLKFCMDGVQTALRNEDYEQAAAHIHRYLCLDKSVIELSRQGKEGSMIDANLKLLQEAEQRLKAIVTEKFAVATKEGDLPQVERFFKIFPLLGLHEEGLSKFSEYLCKQVASKAEENLLLVLGTDMSDRRAAVIFADTLTLLFEGIARIVETHQPIVETYYGPGRLYTLIKYLQVECDRQVEKVVDKFIKQRDYRQQFRHVQSNLMRNSTSEKIEPRELDPILTEVTLMNARSELYLRFLRKRISSDFEVGDSMASEEVKQEHQKCLDKLLNNCLLSCTMQELIGLYITMEEYFMRETVNKAVALDTYEKGQLTSSMVDDVFYIVKKCIGRALSSSSIDCLCAMINLATTELESDFRDVLCHKLRMGFPATTLQDIQRGVTSAVSIMHSSLQQGKFDTKGIESTDEAKLSFLVTLNNVEVCSENISTLKKTLESDCTKLFSQGIGGEQAQAKFDSCLSDLAAVSGKFRDLLQEGLTELNSTAIKPQVQPWINTFLSVSHNIEEEEFSDYEANDPWVQQFILNLEQQMAEFKAGLSPVIYDSLTSLMTSLVAVELEKVVLKSTFNRLGGLQFDKELRSLIAYLTTVTTWTIRDKFARLSQMATILNLERVTEILDYWGANSGPLTWRLTPAEVRQVLALRIDFRSEDIKRLRL</sequence>
<comment type="function">
    <text evidence="1">Required for normal Golgi function. Plays a role in SNARE-pin assembly and Golgi-to-ER retrograde transport via its interaction with SCFD1.</text>
</comment>
<comment type="subunit">
    <text evidence="1">Monomer. Component of the conserved oligomeric Golgi (COG) complex which is composed of eight different subunits and is required for normal Golgi morphology and localization. Mediates interaction of SCFD1 with the COG complex. Interacts with STX5.</text>
</comment>
<comment type="subcellular location">
    <subcellularLocation>
        <location evidence="1">Cytoplasm</location>
        <location evidence="1">Cytosol</location>
    </subcellularLocation>
    <subcellularLocation>
        <location evidence="1">Golgi apparatus membrane</location>
        <topology evidence="1">Peripheral membrane protein</topology>
        <orientation evidence="1">Cytoplasmic side</orientation>
    </subcellularLocation>
</comment>
<comment type="similarity">
    <text evidence="3">Belongs to the COG4 family.</text>
</comment>
<feature type="initiator methionine" description="Removed" evidence="1">
    <location>
        <position position="1"/>
    </location>
</feature>
<feature type="chain" id="PRO_0000282883" description="Conserved oligomeric Golgi complex subunit 4">
    <location>
        <begin position="2"/>
        <end position="785"/>
    </location>
</feature>
<feature type="region of interest" description="Disordered" evidence="2">
    <location>
        <begin position="1"/>
        <end position="25"/>
    </location>
</feature>
<feature type="region of interest" description="Interaction with SCFD1" evidence="1">
    <location>
        <begin position="2"/>
        <end position="84"/>
    </location>
</feature>
<feature type="region of interest" description="Interaction with STX5" evidence="1">
    <location>
        <begin position="85"/>
        <end position="153"/>
    </location>
</feature>
<feature type="region of interest" description="D domain" evidence="1">
    <location>
        <begin position="618"/>
        <end position="740"/>
    </location>
</feature>
<feature type="region of interest" description="E domain; essential for proper cell surface glycosylation" evidence="1">
    <location>
        <begin position="741"/>
        <end position="785"/>
    </location>
</feature>
<feature type="modified residue" description="N-acetylalanine" evidence="1">
    <location>
        <position position="2"/>
    </location>
</feature>
<feature type="modified residue" description="Phosphoserine" evidence="1">
    <location>
        <position position="6"/>
    </location>
</feature>
<protein>
    <recommendedName>
        <fullName>Conserved oligomeric Golgi complex subunit 4</fullName>
        <shortName>COG complex subunit 4</shortName>
    </recommendedName>
    <alternativeName>
        <fullName>Component of oligomeric Golgi complex 4</fullName>
    </alternativeName>
</protein>
<gene>
    <name type="primary">COG4</name>
</gene>
<dbReference type="EMBL" id="BC105251">
    <property type="protein sequence ID" value="AAI05252.1"/>
    <property type="molecule type" value="mRNA"/>
</dbReference>
<dbReference type="RefSeq" id="NP_001029755.1">
    <property type="nucleotide sequence ID" value="NM_001034583.1"/>
</dbReference>
<dbReference type="SMR" id="Q3MHG0"/>
<dbReference type="CORUM" id="Q3MHG0"/>
<dbReference type="FunCoup" id="Q3MHG0">
    <property type="interactions" value="5242"/>
</dbReference>
<dbReference type="STRING" id="9913.ENSBTAP00000017269"/>
<dbReference type="PaxDb" id="9913-ENSBTAP00000017269"/>
<dbReference type="GeneID" id="533007"/>
<dbReference type="KEGG" id="bta:533007"/>
<dbReference type="CTD" id="25839"/>
<dbReference type="VEuPathDB" id="HostDB:ENSBTAG00000012988"/>
<dbReference type="eggNOG" id="KOG0412">
    <property type="taxonomic scope" value="Eukaryota"/>
</dbReference>
<dbReference type="HOGENOM" id="CLU_014853_2_0_1"/>
<dbReference type="InParanoid" id="Q3MHG0"/>
<dbReference type="OMA" id="RASECQQ"/>
<dbReference type="OrthoDB" id="47059at2759"/>
<dbReference type="TreeFam" id="TF105835"/>
<dbReference type="Reactome" id="R-BTA-6807878">
    <property type="pathway name" value="COPI-mediated anterograde transport"/>
</dbReference>
<dbReference type="Reactome" id="R-BTA-6811438">
    <property type="pathway name" value="Intra-Golgi traffic"/>
</dbReference>
<dbReference type="Reactome" id="R-BTA-6811440">
    <property type="pathway name" value="Retrograde transport at the Trans-Golgi-Network"/>
</dbReference>
<dbReference type="Proteomes" id="UP000009136">
    <property type="component" value="Chromosome 18"/>
</dbReference>
<dbReference type="Bgee" id="ENSBTAG00000012988">
    <property type="expression patterns" value="Expressed in retina and 109 other cell types or tissues"/>
</dbReference>
<dbReference type="GO" id="GO:0005829">
    <property type="term" value="C:cytosol"/>
    <property type="evidence" value="ECO:0007669"/>
    <property type="project" value="UniProtKB-SubCell"/>
</dbReference>
<dbReference type="GO" id="GO:0000139">
    <property type="term" value="C:Golgi membrane"/>
    <property type="evidence" value="ECO:0007669"/>
    <property type="project" value="UniProtKB-SubCell"/>
</dbReference>
<dbReference type="GO" id="GO:0017119">
    <property type="term" value="C:Golgi transport complex"/>
    <property type="evidence" value="ECO:0000318"/>
    <property type="project" value="GO_Central"/>
</dbReference>
<dbReference type="GO" id="GO:0007030">
    <property type="term" value="P:Golgi organization"/>
    <property type="evidence" value="ECO:0000318"/>
    <property type="project" value="GO_Central"/>
</dbReference>
<dbReference type="GO" id="GO:0015031">
    <property type="term" value="P:protein transport"/>
    <property type="evidence" value="ECO:0007669"/>
    <property type="project" value="UniProtKB-KW"/>
</dbReference>
<dbReference type="GO" id="GO:0006890">
    <property type="term" value="P:retrograde vesicle-mediated transport, Golgi to endoplasmic reticulum"/>
    <property type="evidence" value="ECO:0000318"/>
    <property type="project" value="GO_Central"/>
</dbReference>
<dbReference type="FunFam" id="1.10.287.1060:FF:000002">
    <property type="entry name" value="Conserved oligomeric Golgi complex subunit 4"/>
    <property type="match status" value="1"/>
</dbReference>
<dbReference type="FunFam" id="1.20.58.1970:FF:000001">
    <property type="entry name" value="Conserved oligomeric Golgi complex subunit 4"/>
    <property type="match status" value="1"/>
</dbReference>
<dbReference type="Gene3D" id="1.20.58.1970">
    <property type="match status" value="1"/>
</dbReference>
<dbReference type="Gene3D" id="1.10.287.1060">
    <property type="entry name" value="ESAT-6-like"/>
    <property type="match status" value="1"/>
</dbReference>
<dbReference type="InterPro" id="IPR048682">
    <property type="entry name" value="COG4"/>
</dbReference>
<dbReference type="InterPro" id="IPR048684">
    <property type="entry name" value="COG4_C"/>
</dbReference>
<dbReference type="InterPro" id="IPR013167">
    <property type="entry name" value="COG4_M"/>
</dbReference>
<dbReference type="InterPro" id="IPR048680">
    <property type="entry name" value="COG4_N"/>
</dbReference>
<dbReference type="PANTHER" id="PTHR24016">
    <property type="entry name" value="CONSERVED OLIGOMERIC GOLGI COMPLEX SUBUNIT 4"/>
    <property type="match status" value="1"/>
</dbReference>
<dbReference type="PANTHER" id="PTHR24016:SF0">
    <property type="entry name" value="CONSERVED OLIGOMERIC GOLGI COMPLEX SUBUNIT 4"/>
    <property type="match status" value="1"/>
</dbReference>
<dbReference type="Pfam" id="PF20662">
    <property type="entry name" value="COG4_C"/>
    <property type="match status" value="1"/>
</dbReference>
<dbReference type="Pfam" id="PF08318">
    <property type="entry name" value="COG4_m"/>
    <property type="match status" value="1"/>
</dbReference>
<dbReference type="Pfam" id="PF20663">
    <property type="entry name" value="COG4_N"/>
    <property type="match status" value="1"/>
</dbReference>
<dbReference type="SMART" id="SM00762">
    <property type="entry name" value="Cog4"/>
    <property type="match status" value="1"/>
</dbReference>
<keyword id="KW-0007">Acetylation</keyword>
<keyword id="KW-0963">Cytoplasm</keyword>
<keyword id="KW-0333">Golgi apparatus</keyword>
<keyword id="KW-0472">Membrane</keyword>
<keyword id="KW-0597">Phosphoprotein</keyword>
<keyword id="KW-0653">Protein transport</keyword>
<keyword id="KW-1185">Reference proteome</keyword>
<keyword id="KW-0813">Transport</keyword>
<evidence type="ECO:0000250" key="1">
    <source>
        <dbReference type="UniProtKB" id="Q9H9E3"/>
    </source>
</evidence>
<evidence type="ECO:0000256" key="2">
    <source>
        <dbReference type="SAM" id="MobiDB-lite"/>
    </source>
</evidence>
<evidence type="ECO:0000305" key="3"/>
<reference key="1">
    <citation type="submission" date="2005-09" db="EMBL/GenBank/DDBJ databases">
        <authorList>
            <consortium name="NIH - Mammalian Gene Collection (MGC) project"/>
        </authorList>
    </citation>
    <scope>NUCLEOTIDE SEQUENCE [LARGE SCALE MRNA]</scope>
    <source>
        <strain>Hereford</strain>
        <tissue>Ascending colon</tissue>
    </source>
</reference>
<accession>Q3MHG0</accession>
<proteinExistence type="evidence at transcript level"/>
<name>COG4_BOVIN</name>